<comment type="similarity">
    <text evidence="1">Belongs to the IS150/IS1296 orfA family.</text>
</comment>
<reference key="1">
    <citation type="journal article" date="1988" name="Nucleic Acids Res.">
        <title>IS150: distribution, nucleotide sequence and phylogenetic relationships of a new E. coli insertion element.</title>
        <authorList>
            <person name="Schwartz E."/>
            <person name="Kroeger M."/>
            <person name="Rak B."/>
        </authorList>
    </citation>
    <scope>NUCLEOTIDE SEQUENCE [GENOMIC DNA]</scope>
</reference>
<reference key="2">
    <citation type="journal article" date="1989" name="Genetics">
        <title>IS103, a new insertion element in Escherichia coli: characterization and distribution in natural populations.</title>
        <authorList>
            <person name="Hall B.G."/>
            <person name="Parker L.L."/>
            <person name="Betts P.W."/>
            <person name="Dubose R.F."/>
            <person name="Sawyer S.A."/>
            <person name="Hartl D.L."/>
        </authorList>
    </citation>
    <scope>NUCLEOTIDE SEQUENCE [GENOMIC DNA]</scope>
</reference>
<reference key="3">
    <citation type="journal article" date="1994" name="Nucleic Acids Res.">
        <title>Analysis of the Escherichia coli genome. V. DNA sequence of the region from 76.0 to 81.5 minutes.</title>
        <authorList>
            <person name="Sofia H.J."/>
            <person name="Burland V."/>
            <person name="Daniels D.L."/>
            <person name="Plunkett G. III"/>
            <person name="Blattner F.R."/>
        </authorList>
    </citation>
    <scope>NUCLEOTIDE SEQUENCE [LARGE SCALE GENOMIC DNA]</scope>
    <source>
        <strain>K12 / MG1655 / ATCC 47076</strain>
    </source>
</reference>
<reference key="4">
    <citation type="journal article" date="1997" name="Science">
        <title>The complete genome sequence of Escherichia coli K-12.</title>
        <authorList>
            <person name="Blattner F.R."/>
            <person name="Plunkett G. III"/>
            <person name="Bloch C.A."/>
            <person name="Perna N.T."/>
            <person name="Burland V."/>
            <person name="Riley M."/>
            <person name="Collado-Vides J."/>
            <person name="Glasner J.D."/>
            <person name="Rode C.K."/>
            <person name="Mayhew G.F."/>
            <person name="Gregor J."/>
            <person name="Davis N.W."/>
            <person name="Kirkpatrick H.A."/>
            <person name="Goeden M.A."/>
            <person name="Rose D.J."/>
            <person name="Mau B."/>
            <person name="Shao Y."/>
        </authorList>
    </citation>
    <scope>NUCLEOTIDE SEQUENCE [LARGE SCALE GENOMIC DNA]</scope>
    <source>
        <strain>K12 / MG1655 / ATCC 47076</strain>
    </source>
</reference>
<reference key="5">
    <citation type="journal article" date="2006" name="Mol. Syst. Biol.">
        <title>Highly accurate genome sequences of Escherichia coli K-12 strains MG1655 and W3110.</title>
        <authorList>
            <person name="Hayashi K."/>
            <person name="Morooka N."/>
            <person name="Yamamoto Y."/>
            <person name="Fujita K."/>
            <person name="Isono K."/>
            <person name="Choi S."/>
            <person name="Ohtsubo E."/>
            <person name="Baba T."/>
            <person name="Wanner B.L."/>
            <person name="Mori H."/>
            <person name="Horiuchi T."/>
        </authorList>
    </citation>
    <scope>NUCLEOTIDE SEQUENCE [LARGE SCALE GENOMIC DNA]</scope>
    <source>
        <strain>K12 / W3110 / ATCC 27325 / DSM 5911</strain>
    </source>
</reference>
<protein>
    <recommendedName>
        <fullName>Insertion element IS150 protein InsJ</fullName>
    </recommendedName>
    <alternativeName>
        <fullName>ORFA</fullName>
    </alternativeName>
</protein>
<accession>P19768</accession>
<accession>Q2M7L9</accession>
<keyword id="KW-1185">Reference proteome</keyword>
<keyword id="KW-0814">Transposable element</keyword>
<proteinExistence type="inferred from homology"/>
<feature type="chain" id="PRO_0000075417" description="Insertion element IS150 protein InsJ">
    <location>
        <begin position="1"/>
        <end position="173"/>
    </location>
</feature>
<sequence length="173" mass="19725">MSKPKYPFEKRLEVVNHYFTTDDGYRIISARFGVPRTQVRTWVALYEKHGEKGLIPKPKGVSADPELRIKVVKAVIEQHMSLNQAAAHFMLAGSGSVARWLKVYEERGEAGLRALKIGTKRNIAISVDPEKAASALELSKDRRIEDLERQVRFLETRLMYLKKLKALAHPTKK</sequence>
<dbReference type="EMBL" id="X07037">
    <property type="protein sequence ID" value="CAA30085.1"/>
    <property type="molecule type" value="Genomic_DNA"/>
</dbReference>
<dbReference type="EMBL" id="U00039">
    <property type="protein sequence ID" value="AAB18534.1"/>
    <property type="molecule type" value="Genomic_DNA"/>
</dbReference>
<dbReference type="EMBL" id="U00096">
    <property type="protein sequence ID" value="AAC76581.1"/>
    <property type="molecule type" value="Genomic_DNA"/>
</dbReference>
<dbReference type="EMBL" id="AP009048">
    <property type="protein sequence ID" value="BAE77737.1"/>
    <property type="molecule type" value="Genomic_DNA"/>
</dbReference>
<dbReference type="PIR" id="S47778">
    <property type="entry name" value="S47778"/>
</dbReference>
<dbReference type="RefSeq" id="NP_065293.1">
    <property type="nucleotide sequence ID" value="NC_002525.1"/>
</dbReference>
<dbReference type="RefSeq" id="NP_418014.1">
    <property type="nucleotide sequence ID" value="NC_000913.3"/>
</dbReference>
<dbReference type="SMR" id="P19768"/>
<dbReference type="FunCoup" id="P19768">
    <property type="interactions" value="7"/>
</dbReference>
<dbReference type="STRING" id="511145.b3557"/>
<dbReference type="PaxDb" id="511145-b3557"/>
<dbReference type="EnsemblBacteria" id="AAC76581">
    <property type="protein sequence ID" value="AAC76581"/>
    <property type="gene ID" value="b3557"/>
</dbReference>
<dbReference type="GeneID" id="948082"/>
<dbReference type="KEGG" id="ecj:JW3527"/>
<dbReference type="KEGG" id="eco:b3557"/>
<dbReference type="KEGG" id="ecoc:C3026_19285"/>
<dbReference type="PATRIC" id="fig|511145.12.peg.3671"/>
<dbReference type="EchoBASE" id="EB4746"/>
<dbReference type="eggNOG" id="COG2963">
    <property type="taxonomic scope" value="Bacteria"/>
</dbReference>
<dbReference type="HOGENOM" id="CLU_027402_17_0_6"/>
<dbReference type="InParanoid" id="P19768"/>
<dbReference type="OMA" id="HYFATDE"/>
<dbReference type="PhylomeDB" id="P19768"/>
<dbReference type="BioCyc" id="EcoCyc:G7776-MONOMER"/>
<dbReference type="PRO" id="PR:P19768"/>
<dbReference type="Proteomes" id="UP000000625">
    <property type="component" value="Chromosome"/>
</dbReference>
<dbReference type="GO" id="GO:0043565">
    <property type="term" value="F:sequence-specific DNA binding"/>
    <property type="evidence" value="ECO:0007669"/>
    <property type="project" value="InterPro"/>
</dbReference>
<dbReference type="Gene3D" id="1.10.10.10">
    <property type="entry name" value="Winged helix-like DNA-binding domain superfamily/Winged helix DNA-binding domain"/>
    <property type="match status" value="2"/>
</dbReference>
<dbReference type="InterPro" id="IPR055247">
    <property type="entry name" value="InsJ-like_HTH"/>
</dbReference>
<dbReference type="InterPro" id="IPR052057">
    <property type="entry name" value="IS150/IS1296_orfA-like"/>
</dbReference>
<dbReference type="InterPro" id="IPR010921">
    <property type="entry name" value="Trp_repressor/repl_initiator"/>
</dbReference>
<dbReference type="InterPro" id="IPR036388">
    <property type="entry name" value="WH-like_DNA-bd_sf"/>
</dbReference>
<dbReference type="PANTHER" id="PTHR33795">
    <property type="entry name" value="INSERTION ELEMENT IS150 PROTEIN INSJ"/>
    <property type="match status" value="1"/>
</dbReference>
<dbReference type="PANTHER" id="PTHR33795:SF1">
    <property type="entry name" value="INSERTION ELEMENT IS150 PROTEIN INSJ"/>
    <property type="match status" value="1"/>
</dbReference>
<dbReference type="Pfam" id="PF13518">
    <property type="entry name" value="HTH_28"/>
    <property type="match status" value="2"/>
</dbReference>
<dbReference type="SUPFAM" id="SSF48295">
    <property type="entry name" value="TrpR-like"/>
    <property type="match status" value="2"/>
</dbReference>
<evidence type="ECO:0000305" key="1"/>
<gene>
    <name type="primary">insJ</name>
    <name type="ordered locus">b3557</name>
    <name type="ordered locus">JW3527</name>
</gene>
<name>INSJ_ECOLI</name>
<organism>
    <name type="scientific">Escherichia coli (strain K12)</name>
    <dbReference type="NCBI Taxonomy" id="83333"/>
    <lineage>
        <taxon>Bacteria</taxon>
        <taxon>Pseudomonadati</taxon>
        <taxon>Pseudomonadota</taxon>
        <taxon>Gammaproteobacteria</taxon>
        <taxon>Enterobacterales</taxon>
        <taxon>Enterobacteriaceae</taxon>
        <taxon>Escherichia</taxon>
    </lineage>
</organism>